<reference key="1">
    <citation type="journal article" date="2004" name="Nat. Biotechnol.">
        <title>The genome sequence of the anaerobic, sulfate-reducing bacterium Desulfovibrio vulgaris Hildenborough.</title>
        <authorList>
            <person name="Heidelberg J.F."/>
            <person name="Seshadri R."/>
            <person name="Haveman S.A."/>
            <person name="Hemme C.L."/>
            <person name="Paulsen I.T."/>
            <person name="Kolonay J.F."/>
            <person name="Eisen J.A."/>
            <person name="Ward N.L."/>
            <person name="Methe B.A."/>
            <person name="Brinkac L.M."/>
            <person name="Daugherty S.C."/>
            <person name="DeBoy R.T."/>
            <person name="Dodson R.J."/>
            <person name="Durkin A.S."/>
            <person name="Madupu R."/>
            <person name="Nelson W.C."/>
            <person name="Sullivan S.A."/>
            <person name="Fouts D.E."/>
            <person name="Haft D.H."/>
            <person name="Selengut J."/>
            <person name="Peterson J.D."/>
            <person name="Davidsen T.M."/>
            <person name="Zafar N."/>
            <person name="Zhou L."/>
            <person name="Radune D."/>
            <person name="Dimitrov G."/>
            <person name="Hance M."/>
            <person name="Tran K."/>
            <person name="Khouri H.M."/>
            <person name="Gill J."/>
            <person name="Utterback T.R."/>
            <person name="Feldblyum T.V."/>
            <person name="Wall J.D."/>
            <person name="Voordouw G."/>
            <person name="Fraser C.M."/>
        </authorList>
    </citation>
    <scope>NUCLEOTIDE SEQUENCE [LARGE SCALE GENOMIC DNA]</scope>
    <source>
        <strain>ATCC 29579 / DSM 644 / CCUG 34227 / NCIMB 8303 / VKM B-1760 / Hildenborough</strain>
    </source>
</reference>
<keyword id="KW-1185">Reference proteome</keyword>
<keyword id="KW-0687">Ribonucleoprotein</keyword>
<keyword id="KW-0689">Ribosomal protein</keyword>
<keyword id="KW-0694">RNA-binding</keyword>
<keyword id="KW-0699">rRNA-binding</keyword>
<organism>
    <name type="scientific">Nitratidesulfovibrio vulgaris (strain ATCC 29579 / DSM 644 / CCUG 34227 / NCIMB 8303 / VKM B-1760 / Hildenborough)</name>
    <name type="common">Desulfovibrio vulgaris</name>
    <dbReference type="NCBI Taxonomy" id="882"/>
    <lineage>
        <taxon>Bacteria</taxon>
        <taxon>Pseudomonadati</taxon>
        <taxon>Thermodesulfobacteriota</taxon>
        <taxon>Desulfovibrionia</taxon>
        <taxon>Desulfovibrionales</taxon>
        <taxon>Desulfovibrionaceae</taxon>
        <taxon>Nitratidesulfovibrio</taxon>
    </lineage>
</organism>
<comment type="function">
    <text evidence="1">One of the primary rRNA binding proteins, this protein initially binds near the 5'-end of the 23S rRNA. It is important during the early stages of 50S assembly. It makes multiple contacts with different domains of the 23S rRNA in the assembled 50S subunit and ribosome.</text>
</comment>
<comment type="function">
    <text evidence="1">Forms part of the polypeptide exit tunnel.</text>
</comment>
<comment type="subunit">
    <text evidence="1">Part of the 50S ribosomal subunit.</text>
</comment>
<comment type="similarity">
    <text evidence="1">Belongs to the universal ribosomal protein uL4 family.</text>
</comment>
<name>RL4_NITV2</name>
<feature type="chain" id="PRO_0000242369" description="Large ribosomal subunit protein uL4">
    <location>
        <begin position="1"/>
        <end position="206"/>
    </location>
</feature>
<accession>Q72CH9</accession>
<protein>
    <recommendedName>
        <fullName evidence="1">Large ribosomal subunit protein uL4</fullName>
    </recommendedName>
    <alternativeName>
        <fullName evidence="2">50S ribosomal protein L4</fullName>
    </alternativeName>
</protein>
<evidence type="ECO:0000255" key="1">
    <source>
        <dbReference type="HAMAP-Rule" id="MF_01328"/>
    </source>
</evidence>
<evidence type="ECO:0000305" key="2"/>
<dbReference type="EMBL" id="AE017285">
    <property type="protein sequence ID" value="AAS95782.1"/>
    <property type="molecule type" value="Genomic_DNA"/>
</dbReference>
<dbReference type="RefSeq" id="WP_010938599.1">
    <property type="nucleotide sequence ID" value="NC_002937.3"/>
</dbReference>
<dbReference type="RefSeq" id="YP_010523.1">
    <property type="nucleotide sequence ID" value="NC_002937.3"/>
</dbReference>
<dbReference type="SMR" id="Q72CH9"/>
<dbReference type="STRING" id="882.DVU_1304"/>
<dbReference type="PaxDb" id="882-DVU_1304"/>
<dbReference type="EnsemblBacteria" id="AAS95782">
    <property type="protein sequence ID" value="AAS95782"/>
    <property type="gene ID" value="DVU_1304"/>
</dbReference>
<dbReference type="KEGG" id="dvu:DVU_1304"/>
<dbReference type="PATRIC" id="fig|882.5.peg.1216"/>
<dbReference type="eggNOG" id="COG0088">
    <property type="taxonomic scope" value="Bacteria"/>
</dbReference>
<dbReference type="HOGENOM" id="CLU_041575_5_2_7"/>
<dbReference type="OrthoDB" id="9803201at2"/>
<dbReference type="PhylomeDB" id="Q72CH9"/>
<dbReference type="Proteomes" id="UP000002194">
    <property type="component" value="Chromosome"/>
</dbReference>
<dbReference type="GO" id="GO:1990904">
    <property type="term" value="C:ribonucleoprotein complex"/>
    <property type="evidence" value="ECO:0007669"/>
    <property type="project" value="UniProtKB-KW"/>
</dbReference>
<dbReference type="GO" id="GO:0005840">
    <property type="term" value="C:ribosome"/>
    <property type="evidence" value="ECO:0007669"/>
    <property type="project" value="UniProtKB-KW"/>
</dbReference>
<dbReference type="GO" id="GO:0019843">
    <property type="term" value="F:rRNA binding"/>
    <property type="evidence" value="ECO:0007669"/>
    <property type="project" value="UniProtKB-UniRule"/>
</dbReference>
<dbReference type="GO" id="GO:0003735">
    <property type="term" value="F:structural constituent of ribosome"/>
    <property type="evidence" value="ECO:0007669"/>
    <property type="project" value="InterPro"/>
</dbReference>
<dbReference type="GO" id="GO:0006412">
    <property type="term" value="P:translation"/>
    <property type="evidence" value="ECO:0007669"/>
    <property type="project" value="UniProtKB-UniRule"/>
</dbReference>
<dbReference type="Gene3D" id="3.40.1370.10">
    <property type="match status" value="1"/>
</dbReference>
<dbReference type="HAMAP" id="MF_01328_B">
    <property type="entry name" value="Ribosomal_uL4_B"/>
    <property type="match status" value="1"/>
</dbReference>
<dbReference type="InterPro" id="IPR002136">
    <property type="entry name" value="Ribosomal_uL4"/>
</dbReference>
<dbReference type="InterPro" id="IPR013005">
    <property type="entry name" value="Ribosomal_uL4-like"/>
</dbReference>
<dbReference type="InterPro" id="IPR023574">
    <property type="entry name" value="Ribosomal_uL4_dom_sf"/>
</dbReference>
<dbReference type="NCBIfam" id="TIGR03953">
    <property type="entry name" value="rplD_bact"/>
    <property type="match status" value="1"/>
</dbReference>
<dbReference type="PANTHER" id="PTHR10746">
    <property type="entry name" value="50S RIBOSOMAL PROTEIN L4"/>
    <property type="match status" value="1"/>
</dbReference>
<dbReference type="PANTHER" id="PTHR10746:SF6">
    <property type="entry name" value="LARGE RIBOSOMAL SUBUNIT PROTEIN UL4M"/>
    <property type="match status" value="1"/>
</dbReference>
<dbReference type="Pfam" id="PF00573">
    <property type="entry name" value="Ribosomal_L4"/>
    <property type="match status" value="1"/>
</dbReference>
<dbReference type="SUPFAM" id="SSF52166">
    <property type="entry name" value="Ribosomal protein L4"/>
    <property type="match status" value="1"/>
</dbReference>
<proteinExistence type="inferred from homology"/>
<gene>
    <name evidence="1" type="primary">rplD</name>
    <name type="ordered locus">DVU_1304</name>
</gene>
<sequence>MAVVKVYDQNKQEAGEITLAPEVFEVEVRPEILHLVVRAQRAAFRAGTHATKTRAFVSGGGLKPWRQKGTGRARAGSIRSPLWRGGAIIFGPQPRDYEFKVNKKVRKLALRMALSSRLAGSNLLVVKGFELPEVKTKLFAKIADTLGLDKALIIAPEENTTLALSVRNIPGITIATPEQLSVYEILKHKQLVLVEGAVASVQDRLK</sequence>